<organism>
    <name type="scientific">Escherichia coli (strain K12)</name>
    <dbReference type="NCBI Taxonomy" id="83333"/>
    <lineage>
        <taxon>Bacteria</taxon>
        <taxon>Pseudomonadati</taxon>
        <taxon>Pseudomonadota</taxon>
        <taxon>Gammaproteobacteria</taxon>
        <taxon>Enterobacterales</taxon>
        <taxon>Enterobacteriaceae</taxon>
        <taxon>Escherichia</taxon>
    </lineage>
</organism>
<keyword id="KW-0238">DNA-binding</keyword>
<keyword id="KW-1185">Reference proteome</keyword>
<keyword id="KW-0678">Repressor</keyword>
<keyword id="KW-0804">Transcription</keyword>
<keyword id="KW-0805">Transcription regulation</keyword>
<comment type="function">
    <text evidence="2">Repressor for the malX and malY genes. Also regulates its own expression. Binds maltose as an inducer.</text>
</comment>
<name>MALI_ECOLI</name>
<evidence type="ECO:0000255" key="1">
    <source>
        <dbReference type="PROSITE-ProRule" id="PRU00111"/>
    </source>
</evidence>
<evidence type="ECO:0000269" key="2">
    <source>
    </source>
</evidence>
<evidence type="ECO:0000305" key="3"/>
<protein>
    <recommendedName>
        <fullName>Maltose regulon regulatory protein MalI</fullName>
    </recommendedName>
</protein>
<dbReference type="EMBL" id="M28539">
    <property type="protein sequence ID" value="AAA24104.1"/>
    <property type="molecule type" value="Genomic_DNA"/>
</dbReference>
<dbReference type="EMBL" id="M60722">
    <property type="protein sequence ID" value="AAA24097.1"/>
    <property type="molecule type" value="mRNA"/>
</dbReference>
<dbReference type="EMBL" id="U00096">
    <property type="protein sequence ID" value="AAC74692.1"/>
    <property type="molecule type" value="Genomic_DNA"/>
</dbReference>
<dbReference type="EMBL" id="AP009048">
    <property type="protein sequence ID" value="BAA15371.1"/>
    <property type="molecule type" value="Genomic_DNA"/>
</dbReference>
<dbReference type="PIR" id="F64918">
    <property type="entry name" value="RPECML"/>
</dbReference>
<dbReference type="RefSeq" id="NP_416137.1">
    <property type="nucleotide sequence ID" value="NC_000913.3"/>
</dbReference>
<dbReference type="RefSeq" id="WP_000179510.1">
    <property type="nucleotide sequence ID" value="NZ_SSZK01000001.1"/>
</dbReference>
<dbReference type="SMR" id="P18811"/>
<dbReference type="BioGRID" id="4261130">
    <property type="interactions" value="126"/>
</dbReference>
<dbReference type="BioGRID" id="851439">
    <property type="interactions" value="3"/>
</dbReference>
<dbReference type="DIP" id="DIP-10143N"/>
<dbReference type="FunCoup" id="P18811">
    <property type="interactions" value="10"/>
</dbReference>
<dbReference type="IntAct" id="P18811">
    <property type="interactions" value="6"/>
</dbReference>
<dbReference type="STRING" id="511145.b1620"/>
<dbReference type="PaxDb" id="511145-b1620"/>
<dbReference type="EnsemblBacteria" id="AAC74692">
    <property type="protein sequence ID" value="AAC74692"/>
    <property type="gene ID" value="b1620"/>
</dbReference>
<dbReference type="GeneID" id="947104"/>
<dbReference type="KEGG" id="ecj:JW1612"/>
<dbReference type="KEGG" id="eco:b1620"/>
<dbReference type="KEGG" id="ecoc:C3026_09315"/>
<dbReference type="PATRIC" id="fig|1411691.4.peg.641"/>
<dbReference type="EchoBASE" id="EB0552"/>
<dbReference type="eggNOG" id="COG1609">
    <property type="taxonomic scope" value="Bacteria"/>
</dbReference>
<dbReference type="HOGENOM" id="CLU_037628_6_0_6"/>
<dbReference type="InParanoid" id="P18811"/>
<dbReference type="OMA" id="ICGPQNI"/>
<dbReference type="OrthoDB" id="9798934at2"/>
<dbReference type="PhylomeDB" id="P18811"/>
<dbReference type="BioCyc" id="EcoCyc:PD00361"/>
<dbReference type="PRO" id="PR:P18811"/>
<dbReference type="Proteomes" id="UP000000625">
    <property type="component" value="Chromosome"/>
</dbReference>
<dbReference type="CollecTF" id="EXPREG_00000930"/>
<dbReference type="GO" id="GO:0032993">
    <property type="term" value="C:protein-DNA complex"/>
    <property type="evidence" value="ECO:0000315"/>
    <property type="project" value="CollecTF"/>
</dbReference>
<dbReference type="GO" id="GO:0003700">
    <property type="term" value="F:DNA-binding transcription factor activity"/>
    <property type="evidence" value="ECO:0000318"/>
    <property type="project" value="GO_Central"/>
</dbReference>
<dbReference type="GO" id="GO:0001217">
    <property type="term" value="F:DNA-binding transcription repressor activity"/>
    <property type="evidence" value="ECO:0000315"/>
    <property type="project" value="CollecTF"/>
</dbReference>
<dbReference type="GO" id="GO:0000976">
    <property type="term" value="F:transcription cis-regulatory region binding"/>
    <property type="evidence" value="ECO:0000315"/>
    <property type="project" value="CollecTF"/>
</dbReference>
<dbReference type="GO" id="GO:0045892">
    <property type="term" value="P:negative regulation of DNA-templated transcription"/>
    <property type="evidence" value="ECO:0000315"/>
    <property type="project" value="EcoCyc"/>
</dbReference>
<dbReference type="GO" id="GO:0006355">
    <property type="term" value="P:regulation of DNA-templated transcription"/>
    <property type="evidence" value="ECO:0000318"/>
    <property type="project" value="GO_Central"/>
</dbReference>
<dbReference type="CDD" id="cd01392">
    <property type="entry name" value="HTH_LacI"/>
    <property type="match status" value="1"/>
</dbReference>
<dbReference type="CDD" id="cd06289">
    <property type="entry name" value="PBP1_MalI-like"/>
    <property type="match status" value="1"/>
</dbReference>
<dbReference type="FunFam" id="1.10.260.40:FF:000019">
    <property type="entry name" value="Maltose regulon transcriptional regulator MalI"/>
    <property type="match status" value="1"/>
</dbReference>
<dbReference type="Gene3D" id="3.40.50.2300">
    <property type="match status" value="2"/>
</dbReference>
<dbReference type="Gene3D" id="1.10.260.40">
    <property type="entry name" value="lambda repressor-like DNA-binding domains"/>
    <property type="match status" value="1"/>
</dbReference>
<dbReference type="InterPro" id="IPR000843">
    <property type="entry name" value="HTH_LacI"/>
</dbReference>
<dbReference type="InterPro" id="IPR010982">
    <property type="entry name" value="Lambda_DNA-bd_dom_sf"/>
</dbReference>
<dbReference type="InterPro" id="IPR001761">
    <property type="entry name" value="Peripla_BP/Lac1_sug-bd_dom"/>
</dbReference>
<dbReference type="InterPro" id="IPR028082">
    <property type="entry name" value="Peripla_BP_I"/>
</dbReference>
<dbReference type="NCBIfam" id="NF007449">
    <property type="entry name" value="PRK10014.1"/>
    <property type="match status" value="1"/>
</dbReference>
<dbReference type="PANTHER" id="PTHR30146:SF148">
    <property type="entry name" value="HTH-TYPE TRANSCRIPTIONAL REPRESSOR PURR-RELATED"/>
    <property type="match status" value="1"/>
</dbReference>
<dbReference type="PANTHER" id="PTHR30146">
    <property type="entry name" value="LACI-RELATED TRANSCRIPTIONAL REPRESSOR"/>
    <property type="match status" value="1"/>
</dbReference>
<dbReference type="Pfam" id="PF00356">
    <property type="entry name" value="LacI"/>
    <property type="match status" value="1"/>
</dbReference>
<dbReference type="Pfam" id="PF00532">
    <property type="entry name" value="Peripla_BP_1"/>
    <property type="match status" value="1"/>
</dbReference>
<dbReference type="SMART" id="SM00354">
    <property type="entry name" value="HTH_LACI"/>
    <property type="match status" value="1"/>
</dbReference>
<dbReference type="SUPFAM" id="SSF47413">
    <property type="entry name" value="lambda repressor-like DNA-binding domains"/>
    <property type="match status" value="1"/>
</dbReference>
<dbReference type="SUPFAM" id="SSF53822">
    <property type="entry name" value="Periplasmic binding protein-like I"/>
    <property type="match status" value="1"/>
</dbReference>
<dbReference type="PROSITE" id="PS00356">
    <property type="entry name" value="HTH_LACI_1"/>
    <property type="match status" value="1"/>
</dbReference>
<dbReference type="PROSITE" id="PS50932">
    <property type="entry name" value="HTH_LACI_2"/>
    <property type="match status" value="1"/>
</dbReference>
<proteinExistence type="evidence at transcript level"/>
<sequence length="342" mass="36625">MATAKKITIHDVALAAGVSVSTVSLVLSGKGRISTATGERVNAAIEELGFVRNRQASALRGGQSGVIGLIVRDLSAPFYAELTAGLTEALEAQGRMVFLLHGGKDGEQLAQRFSLLLNQGVDGVVIAGAAGSSDDLRRMAEEKAIPVIFASRASYLDDVDTVRPDNMQAAQLLTEHLIRNGHQRIAWLGGQSSSLTRAERVGGYCATLLKFGLPFHSDWVLECTSSQKQAAEAITALLRHNPTISAVVCYNETIAMGAWFGLLKAGRQSGESGVDRYFEQQVSLAAFTDATPTTLDDIPVTWASTPARELGITLADRMMQKITHEETHSRNLIIPARLIAAK</sequence>
<gene>
    <name type="primary">malI</name>
    <name type="ordered locus">b1620</name>
    <name type="ordered locus">JW1612</name>
</gene>
<accession>P18811</accession>
<accession>P77151</accession>
<feature type="chain" id="PRO_0000107966" description="Maltose regulon regulatory protein MalI">
    <location>
        <begin position="1"/>
        <end position="342"/>
    </location>
</feature>
<feature type="domain" description="HTH lacI-type" evidence="1">
    <location>
        <begin position="7"/>
        <end position="61"/>
    </location>
</feature>
<feature type="DNA-binding region" description="H-T-H motif" evidence="1">
    <location>
        <begin position="9"/>
        <end position="28"/>
    </location>
</feature>
<feature type="sequence conflict" description="In Ref. 1 and 2." evidence="3" ref="1 2">
    <original>FTDATPTTLDD</original>
    <variation>IYRCDTNHTCMH</variation>
    <location>
        <begin position="287"/>
        <end position="297"/>
    </location>
</feature>
<feature type="sequence conflict" description="In Ref. 1 and 2." evidence="3" ref="1 2">
    <original>RMMQKITHEETHSRNLIIPARLIAAK</original>
    <variation>SHDAKNHP</variation>
    <location>
        <begin position="317"/>
        <end position="342"/>
    </location>
</feature>
<reference key="1">
    <citation type="journal article" date="1989" name="J. Bacteriol.">
        <title>MalI, a novel protein involved in regulation of the maltose system of Escherichia coli, is highly homologous to the repressor proteins GalR, CytR, and LacI.</title>
        <authorList>
            <person name="Reidl J."/>
            <person name="Roemisch K."/>
            <person name="Ehrmann M."/>
            <person name="Boos W."/>
        </authorList>
    </citation>
    <scope>NUCLEOTIDE SEQUENCE [GENOMIC DNA]</scope>
</reference>
<reference key="2">
    <citation type="journal article" date="1991" name="J. Bacteriol.">
        <title>The malX malY operon of Escherichia coli encodes a novel enzyme II of the phosphotransferase system recognizing glucose and maltose and an enzyme abolishing the endogenous induction of the maltose system.</title>
        <authorList>
            <person name="Reidl J."/>
            <person name="Boos W."/>
        </authorList>
    </citation>
    <scope>NUCLEOTIDE SEQUENCE [GENOMIC DNA]</scope>
    <scope>FUNCTION</scope>
</reference>
<reference key="3">
    <citation type="journal article" date="1996" name="DNA Res.">
        <title>A 570-kb DNA sequence of the Escherichia coli K-12 genome corresponding to the 28.0-40.1 min region on the linkage map.</title>
        <authorList>
            <person name="Aiba H."/>
            <person name="Baba T."/>
            <person name="Fujita K."/>
            <person name="Hayashi K."/>
            <person name="Inada T."/>
            <person name="Isono K."/>
            <person name="Itoh T."/>
            <person name="Kasai H."/>
            <person name="Kashimoto K."/>
            <person name="Kimura S."/>
            <person name="Kitakawa M."/>
            <person name="Kitagawa M."/>
            <person name="Makino K."/>
            <person name="Miki T."/>
            <person name="Mizobuchi K."/>
            <person name="Mori H."/>
            <person name="Mori T."/>
            <person name="Motomura K."/>
            <person name="Nakade S."/>
            <person name="Nakamura Y."/>
            <person name="Nashimoto H."/>
            <person name="Nishio Y."/>
            <person name="Oshima T."/>
            <person name="Saito N."/>
            <person name="Sampei G."/>
            <person name="Seki Y."/>
            <person name="Sivasundaram S."/>
            <person name="Tagami H."/>
            <person name="Takeda J."/>
            <person name="Takemoto K."/>
            <person name="Takeuchi Y."/>
            <person name="Wada C."/>
            <person name="Yamamoto Y."/>
            <person name="Horiuchi T."/>
        </authorList>
    </citation>
    <scope>NUCLEOTIDE SEQUENCE [LARGE SCALE GENOMIC DNA]</scope>
    <source>
        <strain>K12 / W3110 / ATCC 27325 / DSM 5911</strain>
    </source>
</reference>
<reference key="4">
    <citation type="journal article" date="1997" name="Science">
        <title>The complete genome sequence of Escherichia coli K-12.</title>
        <authorList>
            <person name="Blattner F.R."/>
            <person name="Plunkett G. III"/>
            <person name="Bloch C.A."/>
            <person name="Perna N.T."/>
            <person name="Burland V."/>
            <person name="Riley M."/>
            <person name="Collado-Vides J."/>
            <person name="Glasner J.D."/>
            <person name="Rode C.K."/>
            <person name="Mayhew G.F."/>
            <person name="Gregor J."/>
            <person name="Davis N.W."/>
            <person name="Kirkpatrick H.A."/>
            <person name="Goeden M.A."/>
            <person name="Rose D.J."/>
            <person name="Mau B."/>
            <person name="Shao Y."/>
        </authorList>
    </citation>
    <scope>NUCLEOTIDE SEQUENCE [LARGE SCALE GENOMIC DNA]</scope>
    <source>
        <strain>K12 / MG1655 / ATCC 47076</strain>
    </source>
</reference>
<reference key="5">
    <citation type="journal article" date="2006" name="Mol. Syst. Biol.">
        <title>Highly accurate genome sequences of Escherichia coli K-12 strains MG1655 and W3110.</title>
        <authorList>
            <person name="Hayashi K."/>
            <person name="Morooka N."/>
            <person name="Yamamoto Y."/>
            <person name="Fujita K."/>
            <person name="Isono K."/>
            <person name="Choi S."/>
            <person name="Ohtsubo E."/>
            <person name="Baba T."/>
            <person name="Wanner B.L."/>
            <person name="Mori H."/>
            <person name="Horiuchi T."/>
        </authorList>
    </citation>
    <scope>NUCLEOTIDE SEQUENCE [LARGE SCALE GENOMIC DNA]</scope>
    <source>
        <strain>K12 / W3110 / ATCC 27325 / DSM 5911</strain>
    </source>
</reference>